<evidence type="ECO:0000255" key="1">
    <source>
        <dbReference type="HAMAP-Rule" id="MF_00709"/>
    </source>
</evidence>
<gene>
    <name evidence="1" type="primary">frdD</name>
    <name type="ordered locus">Asuc_1816</name>
</gene>
<sequence length="114" mass="12335">MINTNPKRSNEPPVWLLFSAGGMISALAFPVLILILGILLPLGIISPDGIIAFAHHWFGKLVILVLTIFPAWAGLHRIHHGMHDIKVHVPSGGLIFYGLAVLYTVVAIWGVASI</sequence>
<keyword id="KW-0997">Cell inner membrane</keyword>
<keyword id="KW-1003">Cell membrane</keyword>
<keyword id="KW-0472">Membrane</keyword>
<keyword id="KW-1185">Reference proteome</keyword>
<keyword id="KW-0812">Transmembrane</keyword>
<keyword id="KW-1133">Transmembrane helix</keyword>
<proteinExistence type="inferred from homology"/>
<accession>A6VQC0</accession>
<dbReference type="EMBL" id="CP000746">
    <property type="protein sequence ID" value="ABR75167.1"/>
    <property type="molecule type" value="Genomic_DNA"/>
</dbReference>
<dbReference type="RefSeq" id="WP_012073544.1">
    <property type="nucleotide sequence ID" value="NC_009655.1"/>
</dbReference>
<dbReference type="SMR" id="A6VQC0"/>
<dbReference type="STRING" id="339671.Asuc_1816"/>
<dbReference type="KEGG" id="asu:Asuc_1816"/>
<dbReference type="eggNOG" id="COG3080">
    <property type="taxonomic scope" value="Bacteria"/>
</dbReference>
<dbReference type="HOGENOM" id="CLU_168367_0_0_6"/>
<dbReference type="OrthoDB" id="9804636at2"/>
<dbReference type="Proteomes" id="UP000001114">
    <property type="component" value="Chromosome"/>
</dbReference>
<dbReference type="GO" id="GO:0045283">
    <property type="term" value="C:fumarate reductase complex"/>
    <property type="evidence" value="ECO:0007669"/>
    <property type="project" value="UniProtKB-UniRule"/>
</dbReference>
<dbReference type="GO" id="GO:0005886">
    <property type="term" value="C:plasma membrane"/>
    <property type="evidence" value="ECO:0007669"/>
    <property type="project" value="UniProtKB-SubCell"/>
</dbReference>
<dbReference type="GO" id="GO:0000104">
    <property type="term" value="F:succinate dehydrogenase activity"/>
    <property type="evidence" value="ECO:0007669"/>
    <property type="project" value="UniProtKB-UniRule"/>
</dbReference>
<dbReference type="GO" id="GO:0006106">
    <property type="term" value="P:fumarate metabolic process"/>
    <property type="evidence" value="ECO:0007669"/>
    <property type="project" value="InterPro"/>
</dbReference>
<dbReference type="CDD" id="cd00547">
    <property type="entry name" value="QFR_TypeD_subunitD"/>
    <property type="match status" value="1"/>
</dbReference>
<dbReference type="Gene3D" id="1.20.1300.10">
    <property type="entry name" value="Fumarate reductase/succinate dehydrogenase, transmembrane subunit"/>
    <property type="match status" value="1"/>
</dbReference>
<dbReference type="HAMAP" id="MF_00709">
    <property type="entry name" value="Fumarate_red_D"/>
    <property type="match status" value="1"/>
</dbReference>
<dbReference type="InterPro" id="IPR003418">
    <property type="entry name" value="Fumarate_red_D"/>
</dbReference>
<dbReference type="InterPro" id="IPR034804">
    <property type="entry name" value="SQR/QFR_C/D"/>
</dbReference>
<dbReference type="NCBIfam" id="NF003977">
    <property type="entry name" value="PRK05470.1-1"/>
    <property type="match status" value="1"/>
</dbReference>
<dbReference type="Pfam" id="PF02313">
    <property type="entry name" value="Fumarate_red_D"/>
    <property type="match status" value="1"/>
</dbReference>
<dbReference type="PIRSF" id="PIRSF000179">
    <property type="entry name" value="FrdD"/>
    <property type="match status" value="1"/>
</dbReference>
<dbReference type="SUPFAM" id="SSF81343">
    <property type="entry name" value="Fumarate reductase respiratory complex transmembrane subunits"/>
    <property type="match status" value="1"/>
</dbReference>
<organism>
    <name type="scientific">Actinobacillus succinogenes (strain ATCC 55618 / DSM 22257 / CCUG 43843 / 130Z)</name>
    <dbReference type="NCBI Taxonomy" id="339671"/>
    <lineage>
        <taxon>Bacteria</taxon>
        <taxon>Pseudomonadati</taxon>
        <taxon>Pseudomonadota</taxon>
        <taxon>Gammaproteobacteria</taxon>
        <taxon>Pasteurellales</taxon>
        <taxon>Pasteurellaceae</taxon>
        <taxon>Actinobacillus</taxon>
    </lineage>
</organism>
<feature type="chain" id="PRO_1000072765" description="Fumarate reductase subunit D">
    <location>
        <begin position="1"/>
        <end position="114"/>
    </location>
</feature>
<feature type="transmembrane region" description="Helical" evidence="1">
    <location>
        <begin position="24"/>
        <end position="44"/>
    </location>
</feature>
<feature type="transmembrane region" description="Helical" evidence="1">
    <location>
        <begin position="49"/>
        <end position="69"/>
    </location>
</feature>
<feature type="transmembrane region" description="Helical" evidence="1">
    <location>
        <begin position="94"/>
        <end position="114"/>
    </location>
</feature>
<name>FRDD_ACTSZ</name>
<comment type="function">
    <text evidence="1">Anchors the catalytic components of the fumarate reductase complex to the cell membrane, binds quinones.</text>
</comment>
<comment type="subunit">
    <text evidence="1">Part of an enzyme complex containing four subunits: a flavoprotein (FrdA), an iron-sulfur protein (FrdB), and two hydrophobic anchor proteins (FrdC and FrdD).</text>
</comment>
<comment type="subcellular location">
    <subcellularLocation>
        <location evidence="1">Cell inner membrane</location>
        <topology evidence="1">Multi-pass membrane protein</topology>
    </subcellularLocation>
</comment>
<comment type="similarity">
    <text evidence="1">Belongs to the FrdD family.</text>
</comment>
<reference key="1">
    <citation type="journal article" date="2010" name="BMC Genomics">
        <title>A genomic perspective on the potential of Actinobacillus succinogenes for industrial succinate production.</title>
        <authorList>
            <person name="McKinlay J.B."/>
            <person name="Laivenieks M."/>
            <person name="Schindler B.D."/>
            <person name="McKinlay A.A."/>
            <person name="Siddaramappa S."/>
            <person name="Challacombe J.F."/>
            <person name="Lowry S.R."/>
            <person name="Clum A."/>
            <person name="Lapidus A.L."/>
            <person name="Burkhart K.B."/>
            <person name="Harkins V."/>
            <person name="Vieille C."/>
        </authorList>
    </citation>
    <scope>NUCLEOTIDE SEQUENCE [LARGE SCALE GENOMIC DNA]</scope>
    <source>
        <strain>ATCC 55618 / DSM 22257 / CCUG 43843 / 130Z</strain>
    </source>
</reference>
<protein>
    <recommendedName>
        <fullName evidence="1">Fumarate reductase subunit D</fullName>
    </recommendedName>
    <alternativeName>
        <fullName evidence="1">Quinol-fumarate reductase subunit D</fullName>
        <shortName evidence="1">QFR subunit D</shortName>
    </alternativeName>
</protein>